<dbReference type="GO" id="GO:0005576">
    <property type="term" value="C:extracellular region"/>
    <property type="evidence" value="ECO:0007669"/>
    <property type="project" value="UniProtKB-SubCell"/>
</dbReference>
<dbReference type="GO" id="GO:0007218">
    <property type="term" value="P:neuropeptide signaling pathway"/>
    <property type="evidence" value="ECO:0007669"/>
    <property type="project" value="UniProtKB-KW"/>
</dbReference>
<dbReference type="InterPro" id="IPR013231">
    <property type="entry name" value="Periviscerokinin"/>
</dbReference>
<dbReference type="Pfam" id="PF08259">
    <property type="entry name" value="Periviscerokin"/>
    <property type="match status" value="1"/>
</dbReference>
<sequence length="11" mass="1091">GSSGLIPFGRT</sequence>
<feature type="peptide" id="PRO_0000378765" description="Periviscerokinin-1" evidence="2">
    <location>
        <begin position="1"/>
        <end position="11"/>
    </location>
</feature>
<feature type="modified residue" description="Threonine amide" evidence="2">
    <location>
        <position position="11"/>
    </location>
</feature>
<evidence type="ECO:0000255" key="1"/>
<evidence type="ECO:0000269" key="2">
    <source>
    </source>
</evidence>
<evidence type="ECO:0000303" key="3">
    <source>
    </source>
</evidence>
<evidence type="ECO:0000305" key="4"/>
<accession>P85744</accession>
<organism>
    <name type="scientific">Princisia vanwaerebeki</name>
    <name type="common">Tiger hisser roach</name>
    <dbReference type="NCBI Taxonomy" id="1661849"/>
    <lineage>
        <taxon>Eukaryota</taxon>
        <taxon>Metazoa</taxon>
        <taxon>Ecdysozoa</taxon>
        <taxon>Arthropoda</taxon>
        <taxon>Hexapoda</taxon>
        <taxon>Insecta</taxon>
        <taxon>Pterygota</taxon>
        <taxon>Neoptera</taxon>
        <taxon>Polyneoptera</taxon>
        <taxon>Dictyoptera</taxon>
        <taxon>Blattodea</taxon>
        <taxon>Blaberoidea</taxon>
        <taxon>Blaberidae</taxon>
        <taxon>Oxyhaloinae</taxon>
        <taxon>Princisia</taxon>
    </lineage>
</organism>
<keyword id="KW-0027">Amidation</keyword>
<keyword id="KW-0903">Direct protein sequencing</keyword>
<keyword id="KW-0527">Neuropeptide</keyword>
<keyword id="KW-0964">Secreted</keyword>
<reference evidence="4" key="1">
    <citation type="journal article" date="2009" name="BMC Evol. Biol.">
        <title>A proteomic approach for studying insect phylogeny: CAPA peptides of ancient insect taxa (Dictyoptera, Blattoptera) as a test case.</title>
        <authorList>
            <person name="Roth S."/>
            <person name="Fromm B."/>
            <person name="Gaede G."/>
            <person name="Predel R."/>
        </authorList>
    </citation>
    <scope>PROTEIN SEQUENCE</scope>
    <scope>AMIDATION AT THR-11</scope>
    <source>
        <tissue evidence="2">Abdominal perisympathetic organs</tissue>
    </source>
</reference>
<protein>
    <recommendedName>
        <fullName evidence="3">Periviscerokinin-1</fullName>
        <shortName evidence="3">PriVa-PVK-1</shortName>
    </recommendedName>
</protein>
<proteinExistence type="evidence at protein level"/>
<comment type="function">
    <text evidence="4">Mediates visceral muscle contractile activity (myotropic activity).</text>
</comment>
<comment type="subcellular location">
    <subcellularLocation>
        <location evidence="4">Secreted</location>
    </subcellularLocation>
</comment>
<comment type="similarity">
    <text evidence="1">Belongs to the periviscerokinin family.</text>
</comment>
<name>PVK1_PRIVA</name>